<reference key="1">
    <citation type="journal article" date="1992" name="Mol. Microbiol.">
        <title>The Aeromonas hydrophila exeE gene, required both for protein secretion and normal outer membrane biogenesis, is a member of a general secretion pathway.</title>
        <authorList>
            <person name="Jiang B."/>
            <person name="Howard S.P."/>
        </authorList>
    </citation>
    <scope>NUCLEOTIDE SEQUENCE [GENOMIC DNA]</scope>
    <source>
        <strain>Ah65</strain>
    </source>
</reference>
<comment type="function">
    <text evidence="4">Component of the type II secretion system inner membrane complex required for the energy-dependent secretion of extracellular factors such as proteases and toxins from the periplasm.</text>
</comment>
<comment type="subunit">
    <text evidence="2 3 4">Type II secretion system is composed of four main components: the outer membrane complex, the inner membrane complex, the cytoplasmic secretion ATPase and the periplasm-spanning pseudopilus (By similarity). Homodimer (By similarity). Interacts with ExeE and ExeL components (By similarity).</text>
</comment>
<comment type="subcellular location">
    <subcellularLocation>
        <location evidence="7">Cell inner membrane</location>
        <topology evidence="7">Multi-pass membrane protein</topology>
    </subcellularLocation>
</comment>
<comment type="similarity">
    <text evidence="7">Belongs to the GSP F family.</text>
</comment>
<name>GSPF_AERHY</name>
<organism>
    <name type="scientific">Aeromonas hydrophila</name>
    <dbReference type="NCBI Taxonomy" id="644"/>
    <lineage>
        <taxon>Bacteria</taxon>
        <taxon>Pseudomonadati</taxon>
        <taxon>Pseudomonadota</taxon>
        <taxon>Gammaproteobacteria</taxon>
        <taxon>Aeromonadales</taxon>
        <taxon>Aeromonadaceae</taxon>
        <taxon>Aeromonas</taxon>
    </lineage>
</organism>
<proteinExistence type="inferred from homology"/>
<dbReference type="EMBL" id="X66504">
    <property type="protein sequence ID" value="CAA47127.1"/>
    <property type="molecule type" value="Genomic_DNA"/>
</dbReference>
<dbReference type="PIR" id="S22670">
    <property type="entry name" value="S22670"/>
</dbReference>
<dbReference type="SMR" id="P31743"/>
<dbReference type="eggNOG" id="COG1459">
    <property type="taxonomic scope" value="Bacteria"/>
</dbReference>
<dbReference type="GO" id="GO:0005886">
    <property type="term" value="C:plasma membrane"/>
    <property type="evidence" value="ECO:0007669"/>
    <property type="project" value="UniProtKB-SubCell"/>
</dbReference>
<dbReference type="GO" id="GO:0015627">
    <property type="term" value="C:type II protein secretion system complex"/>
    <property type="evidence" value="ECO:0007669"/>
    <property type="project" value="InterPro"/>
</dbReference>
<dbReference type="GO" id="GO:0046872">
    <property type="term" value="F:metal ion binding"/>
    <property type="evidence" value="ECO:0007669"/>
    <property type="project" value="UniProtKB-KW"/>
</dbReference>
<dbReference type="GO" id="GO:0015628">
    <property type="term" value="P:protein secretion by the type II secretion system"/>
    <property type="evidence" value="ECO:0007669"/>
    <property type="project" value="InterPro"/>
</dbReference>
<dbReference type="FunFam" id="1.20.81.30:FF:000001">
    <property type="entry name" value="Type II secretion system protein F"/>
    <property type="match status" value="2"/>
</dbReference>
<dbReference type="Gene3D" id="1.20.81.30">
    <property type="entry name" value="Type II secretion system (T2SS), domain F"/>
    <property type="match status" value="2"/>
</dbReference>
<dbReference type="InterPro" id="IPR003004">
    <property type="entry name" value="GspF/PilC"/>
</dbReference>
<dbReference type="InterPro" id="IPR011850">
    <property type="entry name" value="T2SS_GspF"/>
</dbReference>
<dbReference type="InterPro" id="IPR001992">
    <property type="entry name" value="T2SS_GspF/T4SS_PilC_CS"/>
</dbReference>
<dbReference type="InterPro" id="IPR018076">
    <property type="entry name" value="T2SS_GspF_dom"/>
</dbReference>
<dbReference type="InterPro" id="IPR042094">
    <property type="entry name" value="T2SS_GspF_sf"/>
</dbReference>
<dbReference type="NCBIfam" id="TIGR02120">
    <property type="entry name" value="GspF"/>
    <property type="match status" value="1"/>
</dbReference>
<dbReference type="PANTHER" id="PTHR30012">
    <property type="entry name" value="GENERAL SECRETION PATHWAY PROTEIN"/>
    <property type="match status" value="1"/>
</dbReference>
<dbReference type="PANTHER" id="PTHR30012:SF0">
    <property type="entry name" value="TYPE II SECRETION SYSTEM PROTEIN F-RELATED"/>
    <property type="match status" value="1"/>
</dbReference>
<dbReference type="Pfam" id="PF00482">
    <property type="entry name" value="T2SSF"/>
    <property type="match status" value="2"/>
</dbReference>
<dbReference type="PRINTS" id="PR00812">
    <property type="entry name" value="BCTERIALGSPF"/>
</dbReference>
<dbReference type="PROSITE" id="PS00874">
    <property type="entry name" value="T2SP_F"/>
    <property type="match status" value="1"/>
</dbReference>
<protein>
    <recommendedName>
        <fullName>Type II secretion system protein F</fullName>
        <shortName>T2SS protein F</shortName>
    </recommendedName>
    <alternativeName>
        <fullName>General secretion pathway protein F</fullName>
    </alternativeName>
</protein>
<feature type="chain" id="PRO_0000207830" description="Type II secretion system protein F">
    <location>
        <begin position="1"/>
        <end position="388"/>
    </location>
</feature>
<feature type="topological domain" description="Cytoplasmic" evidence="3">
    <location>
        <begin position="1"/>
        <end position="153"/>
    </location>
</feature>
<feature type="transmembrane region" description="Helical" evidence="5">
    <location>
        <begin position="154"/>
        <end position="174"/>
    </location>
</feature>
<feature type="topological domain" description="Periplasmic" evidence="3">
    <location>
        <begin position="175"/>
        <end position="205"/>
    </location>
</feature>
<feature type="transmembrane region" description="Helical" evidence="5">
    <location>
        <begin position="206"/>
        <end position="226"/>
    </location>
</feature>
<feature type="topological domain" description="Cytoplasmic" evidence="3">
    <location>
        <begin position="227"/>
        <end position="350"/>
    </location>
</feature>
<feature type="transmembrane region" description="Helical" evidence="5">
    <location>
        <begin position="351"/>
        <end position="371"/>
    </location>
</feature>
<feature type="topological domain" description="Periplasmic" evidence="1">
    <location>
        <begin position="372"/>
        <end position="388"/>
    </location>
</feature>
<feature type="region of interest" description="Disordered" evidence="6">
    <location>
        <begin position="1"/>
        <end position="28"/>
    </location>
</feature>
<feature type="binding site" evidence="2">
    <location>
        <position position="79"/>
    </location>
    <ligand>
        <name>Ca(2+)</name>
        <dbReference type="ChEBI" id="CHEBI:29108"/>
    </ligand>
</feature>
<feature type="binding site" evidence="2">
    <location>
        <position position="133"/>
    </location>
    <ligand>
        <name>Ca(2+)</name>
        <dbReference type="ChEBI" id="CHEBI:29108"/>
    </ligand>
</feature>
<feature type="binding site" evidence="2">
    <location>
        <position position="137"/>
    </location>
    <ligand>
        <name>Ca(2+)</name>
        <dbReference type="ChEBI" id="CHEBI:29108"/>
    </ligand>
</feature>
<gene>
    <name type="primary">exeF</name>
</gene>
<keyword id="KW-0106">Calcium</keyword>
<keyword id="KW-0997">Cell inner membrane</keyword>
<keyword id="KW-1003">Cell membrane</keyword>
<keyword id="KW-0472">Membrane</keyword>
<keyword id="KW-0479">Metal-binding</keyword>
<keyword id="KW-0653">Protein transport</keyword>
<keyword id="KW-0812">Transmembrane</keyword>
<keyword id="KW-1133">Transmembrane helix</keyword>
<keyword id="KW-0813">Transport</keyword>
<evidence type="ECO:0000250" key="1">
    <source>
        <dbReference type="UniProtKB" id="P41441"/>
    </source>
</evidence>
<evidence type="ECO:0000250" key="2">
    <source>
        <dbReference type="UniProtKB" id="P45780"/>
    </source>
</evidence>
<evidence type="ECO:0000250" key="3">
    <source>
        <dbReference type="UniProtKB" id="Q00513"/>
    </source>
</evidence>
<evidence type="ECO:0000250" key="4">
    <source>
        <dbReference type="UniProtKB" id="Q00514"/>
    </source>
</evidence>
<evidence type="ECO:0000255" key="5"/>
<evidence type="ECO:0000256" key="6">
    <source>
        <dbReference type="SAM" id="MobiDB-lite"/>
    </source>
</evidence>
<evidence type="ECO:0000305" key="7"/>
<sequence length="388" mass="43464">MTEGDSARQVRQQLREQGLTPLEVNETTEKAKREANRFVLFRRGASTSELALITRQLATLVGAGLTIEEALRAVAEQCEKAHLRSLVATVRSKVVEGYSLADSLGAFPHVFDQLFRSMVAAGEKSGHLEKVLNRLADYTEQRQHMRTKLLQAMIYPIVLTLVAVGVISILLTAVVPKVVAQFEHMGQQLPATTRFLIGTSELMQHYGLWFLLLLFIGGFVWRWWLTDEKRRRHWHQVVLRLPVIGRVSRGLNTARFARTLSILNASAVPLLEGMKIAGEVLSNDFARTRIGEATERVREGTSLRKALDETKIFPPMMLHMIASGEQSGELDSMLERAADNQDREFETQVNIALGVFEPLLVVSMAGVVLFIVMSILQPILELNNMVNL</sequence>
<accession>P31743</accession>